<accession>P40332</accession>
<accession>O07924</accession>
<reference key="1">
    <citation type="journal article" date="1997" name="Microbiology">
        <title>A Bacillus subtilis chromosome segment at the 100 degrees to 102 degrees position encoding 11 membrane proteins.</title>
        <authorList>
            <person name="Roche B."/>
            <person name="Autret S."/>
            <person name="Levine A."/>
            <person name="Vannier F."/>
            <person name="Medina N."/>
            <person name="Seror S.J."/>
        </authorList>
    </citation>
    <scope>NUCLEOTIDE SEQUENCE [GENOMIC DNA]</scope>
    <source>
        <strain>168</strain>
    </source>
</reference>
<reference key="2">
    <citation type="submission" date="1997-04" db="EMBL/GenBank/DDBJ databases">
        <title>Bacillus subtilis genome project, DNA sequence from yucA to yucH.</title>
        <authorList>
            <person name="Oudega B."/>
            <person name="Koningstein G."/>
            <person name="Duesterhoeft A."/>
        </authorList>
    </citation>
    <scope>NUCLEOTIDE SEQUENCE [GENOMIC DNA]</scope>
    <source>
        <strain>168</strain>
    </source>
</reference>
<reference key="3">
    <citation type="journal article" date="1997" name="Nature">
        <title>The complete genome sequence of the Gram-positive bacterium Bacillus subtilis.</title>
        <authorList>
            <person name="Kunst F."/>
            <person name="Ogasawara N."/>
            <person name="Moszer I."/>
            <person name="Albertini A.M."/>
            <person name="Alloni G."/>
            <person name="Azevedo V."/>
            <person name="Bertero M.G."/>
            <person name="Bessieres P."/>
            <person name="Bolotin A."/>
            <person name="Borchert S."/>
            <person name="Borriss R."/>
            <person name="Boursier L."/>
            <person name="Brans A."/>
            <person name="Braun M."/>
            <person name="Brignell S.C."/>
            <person name="Bron S."/>
            <person name="Brouillet S."/>
            <person name="Bruschi C.V."/>
            <person name="Caldwell B."/>
            <person name="Capuano V."/>
            <person name="Carter N.M."/>
            <person name="Choi S.-K."/>
            <person name="Codani J.-J."/>
            <person name="Connerton I.F."/>
            <person name="Cummings N.J."/>
            <person name="Daniel R.A."/>
            <person name="Denizot F."/>
            <person name="Devine K.M."/>
            <person name="Duesterhoeft A."/>
            <person name="Ehrlich S.D."/>
            <person name="Emmerson P.T."/>
            <person name="Entian K.-D."/>
            <person name="Errington J."/>
            <person name="Fabret C."/>
            <person name="Ferrari E."/>
            <person name="Foulger D."/>
            <person name="Fritz C."/>
            <person name="Fujita M."/>
            <person name="Fujita Y."/>
            <person name="Fuma S."/>
            <person name="Galizzi A."/>
            <person name="Galleron N."/>
            <person name="Ghim S.-Y."/>
            <person name="Glaser P."/>
            <person name="Goffeau A."/>
            <person name="Golightly E.J."/>
            <person name="Grandi G."/>
            <person name="Guiseppi G."/>
            <person name="Guy B.J."/>
            <person name="Haga K."/>
            <person name="Haiech J."/>
            <person name="Harwood C.R."/>
            <person name="Henaut A."/>
            <person name="Hilbert H."/>
            <person name="Holsappel S."/>
            <person name="Hosono S."/>
            <person name="Hullo M.-F."/>
            <person name="Itaya M."/>
            <person name="Jones L.-M."/>
            <person name="Joris B."/>
            <person name="Karamata D."/>
            <person name="Kasahara Y."/>
            <person name="Klaerr-Blanchard M."/>
            <person name="Klein C."/>
            <person name="Kobayashi Y."/>
            <person name="Koetter P."/>
            <person name="Koningstein G."/>
            <person name="Krogh S."/>
            <person name="Kumano M."/>
            <person name="Kurita K."/>
            <person name="Lapidus A."/>
            <person name="Lardinois S."/>
            <person name="Lauber J."/>
            <person name="Lazarevic V."/>
            <person name="Lee S.-M."/>
            <person name="Levine A."/>
            <person name="Liu H."/>
            <person name="Masuda S."/>
            <person name="Mauel C."/>
            <person name="Medigue C."/>
            <person name="Medina N."/>
            <person name="Mellado R.P."/>
            <person name="Mizuno M."/>
            <person name="Moestl D."/>
            <person name="Nakai S."/>
            <person name="Noback M."/>
            <person name="Noone D."/>
            <person name="O'Reilly M."/>
            <person name="Ogawa K."/>
            <person name="Ogiwara A."/>
            <person name="Oudega B."/>
            <person name="Park S.-H."/>
            <person name="Parro V."/>
            <person name="Pohl T.M."/>
            <person name="Portetelle D."/>
            <person name="Porwollik S."/>
            <person name="Prescott A.M."/>
            <person name="Presecan E."/>
            <person name="Pujic P."/>
            <person name="Purnelle B."/>
            <person name="Rapoport G."/>
            <person name="Rey M."/>
            <person name="Reynolds S."/>
            <person name="Rieger M."/>
            <person name="Rivolta C."/>
            <person name="Rocha E."/>
            <person name="Roche B."/>
            <person name="Rose M."/>
            <person name="Sadaie Y."/>
            <person name="Sato T."/>
            <person name="Scanlan E."/>
            <person name="Schleich S."/>
            <person name="Schroeter R."/>
            <person name="Scoffone F."/>
            <person name="Sekiguchi J."/>
            <person name="Sekowska A."/>
            <person name="Seror S.J."/>
            <person name="Serror P."/>
            <person name="Shin B.-S."/>
            <person name="Soldo B."/>
            <person name="Sorokin A."/>
            <person name="Tacconi E."/>
            <person name="Takagi T."/>
            <person name="Takahashi H."/>
            <person name="Takemaru K."/>
            <person name="Takeuchi M."/>
            <person name="Tamakoshi A."/>
            <person name="Tanaka T."/>
            <person name="Terpstra P."/>
            <person name="Tognoni A."/>
            <person name="Tosato V."/>
            <person name="Uchiyama S."/>
            <person name="Vandenbol M."/>
            <person name="Vannier F."/>
            <person name="Vassarotti A."/>
            <person name="Viari A."/>
            <person name="Wambutt R."/>
            <person name="Wedler E."/>
            <person name="Wedler H."/>
            <person name="Weitzenegger T."/>
            <person name="Winters P."/>
            <person name="Wipat A."/>
            <person name="Yamamoto H."/>
            <person name="Yamane K."/>
            <person name="Yasumoto K."/>
            <person name="Yata K."/>
            <person name="Yoshida K."/>
            <person name="Yoshikawa H.-F."/>
            <person name="Zumstein E."/>
            <person name="Yoshikawa H."/>
            <person name="Danchin A."/>
        </authorList>
    </citation>
    <scope>NUCLEOTIDE SEQUENCE [LARGE SCALE GENOMIC DNA]</scope>
    <source>
        <strain>168</strain>
    </source>
</reference>
<reference key="4">
    <citation type="journal article" date="1993" name="J. Bacteriol.">
        <title>The degA gene product accelerates degradation of Bacillus subtilis phosphoribosylpyrophosphate amidotransferase in Escherichia coli.</title>
        <authorList>
            <person name="Bussey L.B."/>
            <person name="Switzer R.L."/>
        </authorList>
    </citation>
    <scope>NUCLEOTIDE SEQUENCE [GENOMIC DNA] OF 1-92</scope>
    <source>
        <strain>168 / DB104</strain>
    </source>
</reference>
<reference key="5">
    <citation type="journal article" date="2010" name="Microbiology">
        <title>Identification of two scyllo-inositol dehydrogenases in Bacillus subtilis.</title>
        <authorList>
            <person name="Morinaga T."/>
            <person name="Ashida H."/>
            <person name="Yoshida K."/>
        </authorList>
    </citation>
    <scope>FUNCTION</scope>
    <scope>CATALYTIC ACTIVITY</scope>
    <scope>SUBSTRATE SPECIFICITY</scope>
    <scope>BIOPHYSICOCHEMICAL PROPERTIES</scope>
    <scope>DISRUPTION PHENOTYPE</scope>
    <scope>PATHWAY</scope>
    <scope>INDUCTION</scope>
    <source>
        <strain>168 / 60015</strain>
    </source>
</reference>
<keyword id="KW-0520">NAD</keyword>
<keyword id="KW-0560">Oxidoreductase</keyword>
<keyword id="KW-1185">Reference proteome</keyword>
<feature type="chain" id="PRO_0000091783" description="scyllo-inositol 2-dehydrogenase (NAD(+))">
    <location>
        <begin position="1"/>
        <end position="342"/>
    </location>
</feature>
<proteinExistence type="evidence at protein level"/>
<dbReference type="EC" id="1.1.1.370" evidence="1"/>
<dbReference type="EMBL" id="Y09476">
    <property type="protein sequence ID" value="CAA70648.1"/>
    <property type="molecule type" value="Genomic_DNA"/>
</dbReference>
<dbReference type="EMBL" id="Z93940">
    <property type="protein sequence ID" value="CAB07962.1"/>
    <property type="molecule type" value="Genomic_DNA"/>
</dbReference>
<dbReference type="EMBL" id="AL009126">
    <property type="protein sequence ID" value="CAB12924.1"/>
    <property type="molecule type" value="Genomic_DNA"/>
</dbReference>
<dbReference type="EMBL" id="L08822">
    <property type="status" value="NOT_ANNOTATED_CDS"/>
    <property type="molecule type" value="Unassigned_DNA"/>
</dbReference>
<dbReference type="PIR" id="B69838">
    <property type="entry name" value="B69838"/>
</dbReference>
<dbReference type="RefSeq" id="NP_388965.1">
    <property type="nucleotide sequence ID" value="NC_000964.3"/>
</dbReference>
<dbReference type="RefSeq" id="WP_003244942.1">
    <property type="nucleotide sequence ID" value="NZ_OZ025638.1"/>
</dbReference>
<dbReference type="SMR" id="P40332"/>
<dbReference type="FunCoup" id="P40332">
    <property type="interactions" value="387"/>
</dbReference>
<dbReference type="STRING" id="224308.BSU10850"/>
<dbReference type="PaxDb" id="224308-BSU10850"/>
<dbReference type="EnsemblBacteria" id="CAB12924">
    <property type="protein sequence ID" value="CAB12924"/>
    <property type="gene ID" value="BSU_10850"/>
</dbReference>
<dbReference type="GeneID" id="939785"/>
<dbReference type="KEGG" id="bsu:BSU10850"/>
<dbReference type="PATRIC" id="fig|224308.179.peg.1167"/>
<dbReference type="eggNOG" id="COG0673">
    <property type="taxonomic scope" value="Bacteria"/>
</dbReference>
<dbReference type="InParanoid" id="P40332"/>
<dbReference type="OrthoDB" id="9815825at2"/>
<dbReference type="PhylomeDB" id="P40332"/>
<dbReference type="BioCyc" id="BSUB:BSU10850-MONOMER"/>
<dbReference type="BioCyc" id="MetaCyc:BSU10850-MONOMER"/>
<dbReference type="BRENDA" id="1.1.1.370">
    <property type="organism ID" value="658"/>
</dbReference>
<dbReference type="Proteomes" id="UP000001570">
    <property type="component" value="Chromosome"/>
</dbReference>
<dbReference type="GO" id="GO:0070403">
    <property type="term" value="F:NAD+ binding"/>
    <property type="evidence" value="ECO:0000314"/>
    <property type="project" value="UniProtKB"/>
</dbReference>
<dbReference type="GO" id="GO:0070404">
    <property type="term" value="F:NADH binding"/>
    <property type="evidence" value="ECO:0000314"/>
    <property type="project" value="UniProtKB"/>
</dbReference>
<dbReference type="GO" id="GO:0016616">
    <property type="term" value="F:oxidoreductase activity, acting on the CH-OH group of donors, NAD or NADP as acceptor"/>
    <property type="evidence" value="ECO:0000314"/>
    <property type="project" value="UniProtKB"/>
</dbReference>
<dbReference type="GO" id="GO:1902141">
    <property type="term" value="P:cellular response to inositol"/>
    <property type="evidence" value="ECO:0000314"/>
    <property type="project" value="UniProtKB"/>
</dbReference>
<dbReference type="GO" id="GO:0019310">
    <property type="term" value="P:inositol catabolic process"/>
    <property type="evidence" value="ECO:0000315"/>
    <property type="project" value="UniProtKB"/>
</dbReference>
<dbReference type="Gene3D" id="3.30.360.10">
    <property type="entry name" value="Dihydrodipicolinate Reductase, domain 2"/>
    <property type="match status" value="1"/>
</dbReference>
<dbReference type="Gene3D" id="3.40.50.720">
    <property type="entry name" value="NAD(P)-binding Rossmann-like Domain"/>
    <property type="match status" value="1"/>
</dbReference>
<dbReference type="InterPro" id="IPR004104">
    <property type="entry name" value="Gfo/Idh/MocA-like_OxRdtase_C"/>
</dbReference>
<dbReference type="InterPro" id="IPR000683">
    <property type="entry name" value="Gfo/Idh/MocA-like_OxRdtase_N"/>
</dbReference>
<dbReference type="InterPro" id="IPR036291">
    <property type="entry name" value="NAD(P)-bd_dom_sf"/>
</dbReference>
<dbReference type="PANTHER" id="PTHR42840:SF3">
    <property type="entry name" value="BINDING ROSSMANN FOLD OXIDOREDUCTASE, PUTATIVE (AFU_ORTHOLOGUE AFUA_2G10240)-RELATED"/>
    <property type="match status" value="1"/>
</dbReference>
<dbReference type="PANTHER" id="PTHR42840">
    <property type="entry name" value="NAD(P)-BINDING ROSSMANN-FOLD SUPERFAMILY PROTEIN-RELATED"/>
    <property type="match status" value="1"/>
</dbReference>
<dbReference type="Pfam" id="PF01408">
    <property type="entry name" value="GFO_IDH_MocA"/>
    <property type="match status" value="1"/>
</dbReference>
<dbReference type="Pfam" id="PF02894">
    <property type="entry name" value="GFO_IDH_MocA_C"/>
    <property type="match status" value="1"/>
</dbReference>
<dbReference type="SUPFAM" id="SSF55347">
    <property type="entry name" value="Glyceraldehyde-3-phosphate dehydrogenase-like, C-terminal domain"/>
    <property type="match status" value="1"/>
</dbReference>
<dbReference type="SUPFAM" id="SSF51735">
    <property type="entry name" value="NAD(P)-binding Rossmann-fold domains"/>
    <property type="match status" value="1"/>
</dbReference>
<organism>
    <name type="scientific">Bacillus subtilis (strain 168)</name>
    <dbReference type="NCBI Taxonomy" id="224308"/>
    <lineage>
        <taxon>Bacteria</taxon>
        <taxon>Bacillati</taxon>
        <taxon>Bacillota</taxon>
        <taxon>Bacilli</taxon>
        <taxon>Bacillales</taxon>
        <taxon>Bacillaceae</taxon>
        <taxon>Bacillus</taxon>
    </lineage>
</organism>
<protein>
    <recommendedName>
        <fullName>scyllo-inositol 2-dehydrogenase (NAD(+))</fullName>
        <ecNumber evidence="1">1.1.1.370</ecNumber>
    </recommendedName>
</protein>
<name>IOLX_BACSU</name>
<comment type="function">
    <text evidence="1">Catalyzes the reversible NAD(+)-dependent oxidation of scyllo-inositol (SI) to 2,4,6/3,5-pentahydroxycyclohexanone (scyllo-inosose or SIS). Is required for SI catabolism that allows B.subtilis to utilize SI as the sole carbon source for growth. Cannot use NADP(+) instead of NAD(+).</text>
</comment>
<comment type="catalytic activity">
    <reaction evidence="1">
        <text>scyllo-inositol + NAD(+) = scyllo-inosose + NADH + H(+)</text>
        <dbReference type="Rhea" id="RHEA:17613"/>
        <dbReference type="ChEBI" id="CHEBI:10642"/>
        <dbReference type="ChEBI" id="CHEBI:15378"/>
        <dbReference type="ChEBI" id="CHEBI:17811"/>
        <dbReference type="ChEBI" id="CHEBI:57540"/>
        <dbReference type="ChEBI" id="CHEBI:57945"/>
        <dbReference type="EC" id="1.1.1.370"/>
    </reaction>
</comment>
<comment type="biophysicochemical properties">
    <kinetics>
        <KM evidence="1">17.1 mM for scyllo-inositol</KM>
        <KM evidence="1">2.85 mM for scyllo-inosose</KM>
        <KM evidence="1">0.15 mM for NAD(+)</KM>
        <KM evidence="1">0.019 mM for NADH</KM>
        <Vmax evidence="1">6.43 umol/min/mg enzyme toward scyllo-inositol</Vmax>
        <Vmax evidence="1">63.8 umol/min/mg enzyme toward scyllo-inosose</Vmax>
        <Vmax evidence="1">5.85 umol/min/mg enzyme toward NAD(+)</Vmax>
        <Vmax evidence="1">73.2 umol/min/mg enzyme toward NADH</Vmax>
    </kinetics>
</comment>
<comment type="pathway">
    <text evidence="1">Polyol metabolism.</text>
</comment>
<comment type="induction">
    <text evidence="1">Induced by either myo-inositol (MI) or SI; SI is approximately three times more efficient than MI.</text>
</comment>
<comment type="disruption phenotype">
    <text evidence="1">Inactivation of this gene abolishes growth on SI as the sole carbon source, but does not affect growth on MI or glucose.</text>
</comment>
<comment type="similarity">
    <text evidence="3">Belongs to the Gfo/Idh/MocA family.</text>
</comment>
<evidence type="ECO:0000269" key="1">
    <source>
    </source>
</evidence>
<evidence type="ECO:0000303" key="2">
    <source>
    </source>
</evidence>
<evidence type="ECO:0000305" key="3"/>
<gene>
    <name evidence="2" type="primary">iolX</name>
    <name type="synonym">yisS</name>
    <name type="synonym">yucG</name>
    <name type="synonym">yuxD</name>
    <name type="ordered locus">BSU10850</name>
</gene>
<sequence length="342" mass="37484">MEHQVRCAVLGLGRLGYYHAKNLVTSVPGAKLVCVGDPLKGRAEQVARELGIEKWSEDPYEVLEDPGIDAVIIVTPTSTHGDMIIKAAENGKQIFVEKPLTLSLEESKAASEKVKETGVICQVGFMRRFDPAYADAKRRIDAGEIGKPIYYKGFTRDQGAPPAEFIKHSGGIFIDCSIHDYDIARYLLGAEITSVSGHGRILNNPFMEQYGDVDQALTYIEFDSGAAGDVEASRTSPYGHDIRAEVIGTEGSIFIGTLRHQHVTILSAKGSSFDIIPDFQTRFHEAYCLELQHFAECVRNGKTPIVTDIDATINLEVGIAATNSFRNGMPVQLDVKRAYTGM</sequence>